<organism>
    <name type="scientific">Ovis aries</name>
    <name type="common">Sheep</name>
    <dbReference type="NCBI Taxonomy" id="9940"/>
    <lineage>
        <taxon>Eukaryota</taxon>
        <taxon>Metazoa</taxon>
        <taxon>Chordata</taxon>
        <taxon>Craniata</taxon>
        <taxon>Vertebrata</taxon>
        <taxon>Euteleostomi</taxon>
        <taxon>Mammalia</taxon>
        <taxon>Eutheria</taxon>
        <taxon>Laurasiatheria</taxon>
        <taxon>Artiodactyla</taxon>
        <taxon>Ruminantia</taxon>
        <taxon>Pecora</taxon>
        <taxon>Bovidae</taxon>
        <taxon>Caprinae</taxon>
        <taxon>Ovis</taxon>
    </lineage>
</organism>
<name>LYSCK_SHEEP</name>
<sequence>KVFERCELARTLKRFGMDGFRGISLANWMCLARWESSYNTQATNYNSGDRSTDYGIFQINSHWWCNDGKTPGAVNACHIPCSALLQDDITQAVACAKRVVSDPQGIRAWVAWRSHCQNQDLTSYIQGCGV</sequence>
<feature type="chain" id="PRO_0000208856" description="Lysozyme C, kidney isozyme">
    <location>
        <begin position="1"/>
        <end position="130"/>
    </location>
</feature>
<feature type="domain" description="C-type lysozyme" evidence="1">
    <location>
        <begin position="1"/>
        <end position="130"/>
    </location>
</feature>
<feature type="active site" evidence="1">
    <location>
        <position position="35"/>
    </location>
</feature>
<feature type="active site" evidence="1">
    <location>
        <position position="53"/>
    </location>
</feature>
<feature type="disulfide bond" evidence="1">
    <location>
        <begin position="6"/>
        <end position="128"/>
    </location>
</feature>
<feature type="disulfide bond" evidence="1">
    <location>
        <begin position="30"/>
        <end position="116"/>
    </location>
</feature>
<feature type="disulfide bond" evidence="1">
    <location>
        <begin position="65"/>
        <end position="81"/>
    </location>
</feature>
<feature type="disulfide bond" evidence="1">
    <location>
        <begin position="77"/>
        <end position="95"/>
    </location>
</feature>
<accession>P80190</accession>
<protein>
    <recommendedName>
        <fullName>Lysozyme C, kidney isozyme</fullName>
        <ecNumber>3.2.1.17</ecNumber>
    </recommendedName>
    <alternativeName>
        <fullName>1,4-beta-N-acetylmuramidase C</fullName>
    </alternativeName>
</protein>
<proteinExistence type="evidence at protein level"/>
<reference key="1">
    <citation type="journal article" date="1993" name="Eur. J. Biochem.">
        <title>The primary structures and properties of non-stomach lysozymes of sheep and cow, and implication for functional divergence of lysozyme.</title>
        <authorList>
            <person name="Ito Y."/>
            <person name="Yamada H."/>
            <person name="Nakamura M."/>
            <person name="Yoshikawa A."/>
            <person name="Ueda T."/>
            <person name="Imoto T."/>
        </authorList>
    </citation>
    <scope>PROTEIN SEQUENCE</scope>
    <source>
        <tissue>Kidney</tissue>
    </source>
</reference>
<reference key="2">
    <citation type="journal article" date="1995" name="J. Mol. Evol.">
        <title>Evolution of the bovine lysozyme gene family: changes in gene expression and reversion of function.</title>
        <authorList>
            <person name="Irwin D.M."/>
        </authorList>
    </citation>
    <scope>NUCLEOTIDE SEQUENCE [GENOMIC DNA] OF 34-63</scope>
</reference>
<dbReference type="EC" id="3.2.1.17"/>
<dbReference type="EMBL" id="U19473">
    <property type="protein sequence ID" value="AAA85547.1"/>
    <property type="molecule type" value="Genomic_DNA"/>
</dbReference>
<dbReference type="PIR" id="S32465">
    <property type="entry name" value="S32465"/>
</dbReference>
<dbReference type="SMR" id="P80190"/>
<dbReference type="STRING" id="9940.ENSOARP00000022041"/>
<dbReference type="CAZy" id="GH22">
    <property type="family name" value="Glycoside Hydrolase Family 22"/>
</dbReference>
<dbReference type="PaxDb" id="9940-ENSOARP00000022041"/>
<dbReference type="eggNOG" id="ENOG502S1S1">
    <property type="taxonomic scope" value="Eukaryota"/>
</dbReference>
<dbReference type="BRENDA" id="3.2.1.17">
    <property type="organism ID" value="2668"/>
</dbReference>
<dbReference type="Proteomes" id="UP000002356">
    <property type="component" value="Unplaced"/>
</dbReference>
<dbReference type="GO" id="GO:0005576">
    <property type="term" value="C:extracellular region"/>
    <property type="evidence" value="ECO:0007669"/>
    <property type="project" value="UniProtKB-SubCell"/>
</dbReference>
<dbReference type="GO" id="GO:0003796">
    <property type="term" value="F:lysozyme activity"/>
    <property type="evidence" value="ECO:0007669"/>
    <property type="project" value="UniProtKB-EC"/>
</dbReference>
<dbReference type="GO" id="GO:0050829">
    <property type="term" value="P:defense response to Gram-negative bacterium"/>
    <property type="evidence" value="ECO:0007669"/>
    <property type="project" value="TreeGrafter"/>
</dbReference>
<dbReference type="GO" id="GO:0050830">
    <property type="term" value="P:defense response to Gram-positive bacterium"/>
    <property type="evidence" value="ECO:0007669"/>
    <property type="project" value="TreeGrafter"/>
</dbReference>
<dbReference type="GO" id="GO:0031640">
    <property type="term" value="P:killing of cells of another organism"/>
    <property type="evidence" value="ECO:0007669"/>
    <property type="project" value="UniProtKB-KW"/>
</dbReference>
<dbReference type="CDD" id="cd16897">
    <property type="entry name" value="LYZ_C"/>
    <property type="match status" value="1"/>
</dbReference>
<dbReference type="FunFam" id="1.10.530.10:FF:000001">
    <property type="entry name" value="Lysozyme C"/>
    <property type="match status" value="1"/>
</dbReference>
<dbReference type="Gene3D" id="1.10.530.10">
    <property type="match status" value="1"/>
</dbReference>
<dbReference type="InterPro" id="IPR001916">
    <property type="entry name" value="Glyco_hydro_22"/>
</dbReference>
<dbReference type="InterPro" id="IPR019799">
    <property type="entry name" value="Glyco_hydro_22_CS"/>
</dbReference>
<dbReference type="InterPro" id="IPR000974">
    <property type="entry name" value="Glyco_hydro_22_lys"/>
</dbReference>
<dbReference type="InterPro" id="IPR023346">
    <property type="entry name" value="Lysozyme-like_dom_sf"/>
</dbReference>
<dbReference type="PANTHER" id="PTHR11407">
    <property type="entry name" value="LYSOZYME C"/>
    <property type="match status" value="1"/>
</dbReference>
<dbReference type="PANTHER" id="PTHR11407:SF28">
    <property type="entry name" value="LYSOZYME C"/>
    <property type="match status" value="1"/>
</dbReference>
<dbReference type="Pfam" id="PF00062">
    <property type="entry name" value="Lys"/>
    <property type="match status" value="1"/>
</dbReference>
<dbReference type="PRINTS" id="PR00137">
    <property type="entry name" value="LYSOZYME"/>
</dbReference>
<dbReference type="PRINTS" id="PR00135">
    <property type="entry name" value="LYZLACT"/>
</dbReference>
<dbReference type="SMART" id="SM00263">
    <property type="entry name" value="LYZ1"/>
    <property type="match status" value="1"/>
</dbReference>
<dbReference type="SUPFAM" id="SSF53955">
    <property type="entry name" value="Lysozyme-like"/>
    <property type="match status" value="1"/>
</dbReference>
<dbReference type="PROSITE" id="PS00128">
    <property type="entry name" value="GLYCOSYL_HYDROL_F22_1"/>
    <property type="match status" value="1"/>
</dbReference>
<dbReference type="PROSITE" id="PS51348">
    <property type="entry name" value="GLYCOSYL_HYDROL_F22_2"/>
    <property type="match status" value="1"/>
</dbReference>
<comment type="function">
    <text>Lysozymes have primarily a bacteriolytic function; those in tissues and body fluids are associated with the monocyte-macrophage system and enhance the activity of immunoagents.</text>
</comment>
<comment type="catalytic activity">
    <reaction>
        <text>Hydrolysis of (1-&gt;4)-beta-linkages between N-acetylmuramic acid and N-acetyl-D-glucosamine residues in a peptidoglycan and between N-acetyl-D-glucosamine residues in chitodextrins.</text>
        <dbReference type="EC" id="3.2.1.17"/>
    </reaction>
</comment>
<comment type="subunit">
    <text>Monomer.</text>
</comment>
<comment type="subcellular location">
    <subcellularLocation>
        <location>Secreted</location>
    </subcellularLocation>
</comment>
<comment type="miscellaneous">
    <text>The sequence shown here is a non-stomach isozyme.</text>
</comment>
<comment type="similarity">
    <text evidence="1">Belongs to the glycosyl hydrolase 22 family.</text>
</comment>
<evidence type="ECO:0000255" key="1">
    <source>
        <dbReference type="PROSITE-ProRule" id="PRU00680"/>
    </source>
</evidence>
<keyword id="KW-0929">Antimicrobial</keyword>
<keyword id="KW-0081">Bacteriolytic enzyme</keyword>
<keyword id="KW-0903">Direct protein sequencing</keyword>
<keyword id="KW-1015">Disulfide bond</keyword>
<keyword id="KW-0326">Glycosidase</keyword>
<keyword id="KW-0378">Hydrolase</keyword>
<keyword id="KW-1185">Reference proteome</keyword>
<keyword id="KW-0964">Secreted</keyword>